<comment type="function">
    <text evidence="1">Catalyzes the NADPH-dependent rearrangement and reduction of 1-deoxy-D-xylulose-5-phosphate (DXP) to 2-C-methyl-D-erythritol 4-phosphate (MEP).</text>
</comment>
<comment type="catalytic activity">
    <reaction evidence="1">
        <text>2-C-methyl-D-erythritol 4-phosphate + NADP(+) = 1-deoxy-D-xylulose 5-phosphate + NADPH + H(+)</text>
        <dbReference type="Rhea" id="RHEA:13717"/>
        <dbReference type="ChEBI" id="CHEBI:15378"/>
        <dbReference type="ChEBI" id="CHEBI:57783"/>
        <dbReference type="ChEBI" id="CHEBI:57792"/>
        <dbReference type="ChEBI" id="CHEBI:58262"/>
        <dbReference type="ChEBI" id="CHEBI:58349"/>
        <dbReference type="EC" id="1.1.1.267"/>
    </reaction>
    <physiologicalReaction direction="right-to-left" evidence="1">
        <dbReference type="Rhea" id="RHEA:13719"/>
    </physiologicalReaction>
</comment>
<comment type="cofactor">
    <cofactor evidence="1">
        <name>Mg(2+)</name>
        <dbReference type="ChEBI" id="CHEBI:18420"/>
    </cofactor>
    <cofactor evidence="1">
        <name>Mn(2+)</name>
        <dbReference type="ChEBI" id="CHEBI:29035"/>
    </cofactor>
</comment>
<comment type="pathway">
    <text evidence="1">Isoprenoid biosynthesis; isopentenyl diphosphate biosynthesis via DXP pathway; isopentenyl diphosphate from 1-deoxy-D-xylulose 5-phosphate: step 1/6.</text>
</comment>
<comment type="similarity">
    <text evidence="1">Belongs to the DXR family.</text>
</comment>
<organism>
    <name type="scientific">Cupriavidus necator (strain ATCC 17699 / DSM 428 / KCTC 22496 / NCIMB 10442 / H16 / Stanier 337)</name>
    <name type="common">Ralstonia eutropha</name>
    <dbReference type="NCBI Taxonomy" id="381666"/>
    <lineage>
        <taxon>Bacteria</taxon>
        <taxon>Pseudomonadati</taxon>
        <taxon>Pseudomonadota</taxon>
        <taxon>Betaproteobacteria</taxon>
        <taxon>Burkholderiales</taxon>
        <taxon>Burkholderiaceae</taxon>
        <taxon>Cupriavidus</taxon>
    </lineage>
</organism>
<name>DXR_CUPNH</name>
<reference key="1">
    <citation type="journal article" date="2006" name="Nat. Biotechnol.">
        <title>Genome sequence of the bioplastic-producing 'Knallgas' bacterium Ralstonia eutropha H16.</title>
        <authorList>
            <person name="Pohlmann A."/>
            <person name="Fricke W.F."/>
            <person name="Reinecke F."/>
            <person name="Kusian B."/>
            <person name="Liesegang H."/>
            <person name="Cramm R."/>
            <person name="Eitinger T."/>
            <person name="Ewering C."/>
            <person name="Poetter M."/>
            <person name="Schwartz E."/>
            <person name="Strittmatter A."/>
            <person name="Voss I."/>
            <person name="Gottschalk G."/>
            <person name="Steinbuechel A."/>
            <person name="Friedrich B."/>
            <person name="Bowien B."/>
        </authorList>
    </citation>
    <scope>NUCLEOTIDE SEQUENCE [LARGE SCALE GENOMIC DNA]</scope>
    <source>
        <strain>ATCC 17699 / DSM 428 / KCTC 22496 / NCIMB 10442 / H16 / Stanier 337</strain>
    </source>
</reference>
<feature type="chain" id="PRO_1000058415" description="1-deoxy-D-xylulose 5-phosphate reductoisomerase">
    <location>
        <begin position="1"/>
        <end position="393"/>
    </location>
</feature>
<feature type="binding site" evidence="1">
    <location>
        <position position="10"/>
    </location>
    <ligand>
        <name>NADPH</name>
        <dbReference type="ChEBI" id="CHEBI:57783"/>
    </ligand>
</feature>
<feature type="binding site" evidence="1">
    <location>
        <position position="11"/>
    </location>
    <ligand>
        <name>NADPH</name>
        <dbReference type="ChEBI" id="CHEBI:57783"/>
    </ligand>
</feature>
<feature type="binding site" evidence="1">
    <location>
        <position position="12"/>
    </location>
    <ligand>
        <name>NADPH</name>
        <dbReference type="ChEBI" id="CHEBI:57783"/>
    </ligand>
</feature>
<feature type="binding site" evidence="1">
    <location>
        <position position="13"/>
    </location>
    <ligand>
        <name>NADPH</name>
        <dbReference type="ChEBI" id="CHEBI:57783"/>
    </ligand>
</feature>
<feature type="binding site" evidence="1">
    <location>
        <position position="37"/>
    </location>
    <ligand>
        <name>NADPH</name>
        <dbReference type="ChEBI" id="CHEBI:57783"/>
    </ligand>
</feature>
<feature type="binding site" evidence="1">
    <location>
        <position position="38"/>
    </location>
    <ligand>
        <name>NADPH</name>
        <dbReference type="ChEBI" id="CHEBI:57783"/>
    </ligand>
</feature>
<feature type="binding site" evidence="1">
    <location>
        <position position="124"/>
    </location>
    <ligand>
        <name>NADPH</name>
        <dbReference type="ChEBI" id="CHEBI:57783"/>
    </ligand>
</feature>
<feature type="binding site" evidence="1">
    <location>
        <position position="125"/>
    </location>
    <ligand>
        <name>1-deoxy-D-xylulose 5-phosphate</name>
        <dbReference type="ChEBI" id="CHEBI:57792"/>
    </ligand>
</feature>
<feature type="binding site" evidence="1">
    <location>
        <position position="126"/>
    </location>
    <ligand>
        <name>NADPH</name>
        <dbReference type="ChEBI" id="CHEBI:57783"/>
    </ligand>
</feature>
<feature type="binding site" evidence="1">
    <location>
        <position position="150"/>
    </location>
    <ligand>
        <name>Mn(2+)</name>
        <dbReference type="ChEBI" id="CHEBI:29035"/>
    </ligand>
</feature>
<feature type="binding site" evidence="1">
    <location>
        <position position="151"/>
    </location>
    <ligand>
        <name>1-deoxy-D-xylulose 5-phosphate</name>
        <dbReference type="ChEBI" id="CHEBI:57792"/>
    </ligand>
</feature>
<feature type="binding site" evidence="1">
    <location>
        <position position="152"/>
    </location>
    <ligand>
        <name>1-deoxy-D-xylulose 5-phosphate</name>
        <dbReference type="ChEBI" id="CHEBI:57792"/>
    </ligand>
</feature>
<feature type="binding site" evidence="1">
    <location>
        <position position="152"/>
    </location>
    <ligand>
        <name>Mn(2+)</name>
        <dbReference type="ChEBI" id="CHEBI:29035"/>
    </ligand>
</feature>
<feature type="binding site" evidence="1">
    <location>
        <position position="179"/>
    </location>
    <ligand>
        <name>1-deoxy-D-xylulose 5-phosphate</name>
        <dbReference type="ChEBI" id="CHEBI:57792"/>
    </ligand>
</feature>
<feature type="binding site" evidence="1">
    <location>
        <position position="202"/>
    </location>
    <ligand>
        <name>1-deoxy-D-xylulose 5-phosphate</name>
        <dbReference type="ChEBI" id="CHEBI:57792"/>
    </ligand>
</feature>
<feature type="binding site" evidence="1">
    <location>
        <position position="208"/>
    </location>
    <ligand>
        <name>NADPH</name>
        <dbReference type="ChEBI" id="CHEBI:57783"/>
    </ligand>
</feature>
<feature type="binding site" evidence="1">
    <location>
        <position position="215"/>
    </location>
    <ligand>
        <name>1-deoxy-D-xylulose 5-phosphate</name>
        <dbReference type="ChEBI" id="CHEBI:57792"/>
    </ligand>
</feature>
<feature type="binding site" evidence="1">
    <location>
        <position position="220"/>
    </location>
    <ligand>
        <name>1-deoxy-D-xylulose 5-phosphate</name>
        <dbReference type="ChEBI" id="CHEBI:57792"/>
    </ligand>
</feature>
<feature type="binding site" evidence="1">
    <location>
        <position position="221"/>
    </location>
    <ligand>
        <name>1-deoxy-D-xylulose 5-phosphate</name>
        <dbReference type="ChEBI" id="CHEBI:57792"/>
    </ligand>
</feature>
<feature type="binding site" evidence="1">
    <location>
        <position position="224"/>
    </location>
    <ligand>
        <name>1-deoxy-D-xylulose 5-phosphate</name>
        <dbReference type="ChEBI" id="CHEBI:57792"/>
    </ligand>
</feature>
<feature type="binding site" evidence="1">
    <location>
        <position position="224"/>
    </location>
    <ligand>
        <name>Mn(2+)</name>
        <dbReference type="ChEBI" id="CHEBI:29035"/>
    </ligand>
</feature>
<sequence>MHRITILGATGSIGESTLDVVRRHADRYVVHALTAHRQVRKLADQCVEFRPARAVVGTAEAALELETLLRDAGVKTEVSHGEAALESVAADAQTDSVMAAIVGAAGLRPTLAAARAGKRVLLANKEALVMSGRIFMDAVREHGATLLPIDSEHNAIFQCLPADDPRYGRGVARVLLTASGGPFRTRDPATLHDISPDQACAHPNWVMGRKISVDSATMMNKGLEVIEAHWLFGAPAERIEVLIHPQSIVHSMVAYTDGSVLAQLGNPDMRTPIAYGLAYPERIDAGVTPLDLTVAGGLHFEKPDLVRFPCLGLAFDALRAGGVAPAALNAANEVAVEAFLGGTVRFTDIAGIVRQVLEATPQGPADTLEAVLSADALAREAAREGVAALAAKR</sequence>
<gene>
    <name evidence="1" type="primary">dxr</name>
    <name type="ordered locus">H16_A2049</name>
</gene>
<dbReference type="EC" id="1.1.1.267" evidence="1"/>
<dbReference type="EMBL" id="AM260479">
    <property type="protein sequence ID" value="CAJ93149.1"/>
    <property type="molecule type" value="Genomic_DNA"/>
</dbReference>
<dbReference type="SMR" id="Q0KA22"/>
<dbReference type="STRING" id="381666.H16_A2049"/>
<dbReference type="KEGG" id="reh:H16_A2049"/>
<dbReference type="eggNOG" id="COG0743">
    <property type="taxonomic scope" value="Bacteria"/>
</dbReference>
<dbReference type="HOGENOM" id="CLU_035714_4_0_4"/>
<dbReference type="OrthoDB" id="9806546at2"/>
<dbReference type="UniPathway" id="UPA00056">
    <property type="reaction ID" value="UER00092"/>
</dbReference>
<dbReference type="Proteomes" id="UP000008210">
    <property type="component" value="Chromosome 1"/>
</dbReference>
<dbReference type="GO" id="GO:0030604">
    <property type="term" value="F:1-deoxy-D-xylulose-5-phosphate reductoisomerase activity"/>
    <property type="evidence" value="ECO:0007669"/>
    <property type="project" value="UniProtKB-UniRule"/>
</dbReference>
<dbReference type="GO" id="GO:0030145">
    <property type="term" value="F:manganese ion binding"/>
    <property type="evidence" value="ECO:0007669"/>
    <property type="project" value="TreeGrafter"/>
</dbReference>
<dbReference type="GO" id="GO:0070402">
    <property type="term" value="F:NADPH binding"/>
    <property type="evidence" value="ECO:0007669"/>
    <property type="project" value="InterPro"/>
</dbReference>
<dbReference type="GO" id="GO:0051484">
    <property type="term" value="P:isopentenyl diphosphate biosynthetic process, methylerythritol 4-phosphate pathway involved in terpenoid biosynthetic process"/>
    <property type="evidence" value="ECO:0007669"/>
    <property type="project" value="TreeGrafter"/>
</dbReference>
<dbReference type="FunFam" id="3.40.50.720:FF:000045">
    <property type="entry name" value="1-deoxy-D-xylulose 5-phosphate reductoisomerase"/>
    <property type="match status" value="1"/>
</dbReference>
<dbReference type="Gene3D" id="1.10.1740.10">
    <property type="match status" value="1"/>
</dbReference>
<dbReference type="Gene3D" id="3.40.50.720">
    <property type="entry name" value="NAD(P)-binding Rossmann-like Domain"/>
    <property type="match status" value="1"/>
</dbReference>
<dbReference type="HAMAP" id="MF_00183">
    <property type="entry name" value="DXP_reductoisom"/>
    <property type="match status" value="1"/>
</dbReference>
<dbReference type="InterPro" id="IPR003821">
    <property type="entry name" value="DXP_reductoisomerase"/>
</dbReference>
<dbReference type="InterPro" id="IPR013644">
    <property type="entry name" value="DXP_reductoisomerase_C"/>
</dbReference>
<dbReference type="InterPro" id="IPR013512">
    <property type="entry name" value="DXP_reductoisomerase_N"/>
</dbReference>
<dbReference type="InterPro" id="IPR026877">
    <property type="entry name" value="DXPR_C"/>
</dbReference>
<dbReference type="InterPro" id="IPR036169">
    <property type="entry name" value="DXPR_C_sf"/>
</dbReference>
<dbReference type="InterPro" id="IPR036291">
    <property type="entry name" value="NAD(P)-bd_dom_sf"/>
</dbReference>
<dbReference type="NCBIfam" id="TIGR00243">
    <property type="entry name" value="Dxr"/>
    <property type="match status" value="1"/>
</dbReference>
<dbReference type="NCBIfam" id="NF003938">
    <property type="entry name" value="PRK05447.1-1"/>
    <property type="match status" value="1"/>
</dbReference>
<dbReference type="NCBIfam" id="NF009114">
    <property type="entry name" value="PRK12464.1"/>
    <property type="match status" value="1"/>
</dbReference>
<dbReference type="PANTHER" id="PTHR30525">
    <property type="entry name" value="1-DEOXY-D-XYLULOSE 5-PHOSPHATE REDUCTOISOMERASE"/>
    <property type="match status" value="1"/>
</dbReference>
<dbReference type="PANTHER" id="PTHR30525:SF0">
    <property type="entry name" value="1-DEOXY-D-XYLULOSE 5-PHOSPHATE REDUCTOISOMERASE, CHLOROPLASTIC"/>
    <property type="match status" value="1"/>
</dbReference>
<dbReference type="Pfam" id="PF08436">
    <property type="entry name" value="DXP_redisom_C"/>
    <property type="match status" value="1"/>
</dbReference>
<dbReference type="Pfam" id="PF02670">
    <property type="entry name" value="DXP_reductoisom"/>
    <property type="match status" value="1"/>
</dbReference>
<dbReference type="Pfam" id="PF13288">
    <property type="entry name" value="DXPR_C"/>
    <property type="match status" value="1"/>
</dbReference>
<dbReference type="PIRSF" id="PIRSF006205">
    <property type="entry name" value="Dxp_reductismrs"/>
    <property type="match status" value="1"/>
</dbReference>
<dbReference type="SUPFAM" id="SSF69055">
    <property type="entry name" value="1-deoxy-D-xylulose-5-phosphate reductoisomerase, C-terminal domain"/>
    <property type="match status" value="1"/>
</dbReference>
<dbReference type="SUPFAM" id="SSF55347">
    <property type="entry name" value="Glyceraldehyde-3-phosphate dehydrogenase-like, C-terminal domain"/>
    <property type="match status" value="1"/>
</dbReference>
<dbReference type="SUPFAM" id="SSF51735">
    <property type="entry name" value="NAD(P)-binding Rossmann-fold domains"/>
    <property type="match status" value="1"/>
</dbReference>
<accession>Q0KA22</accession>
<keyword id="KW-0414">Isoprene biosynthesis</keyword>
<keyword id="KW-0464">Manganese</keyword>
<keyword id="KW-0479">Metal-binding</keyword>
<keyword id="KW-0521">NADP</keyword>
<keyword id="KW-0560">Oxidoreductase</keyword>
<keyword id="KW-1185">Reference proteome</keyword>
<proteinExistence type="inferred from homology"/>
<protein>
    <recommendedName>
        <fullName evidence="1">1-deoxy-D-xylulose 5-phosphate reductoisomerase</fullName>
        <shortName evidence="1">DXP reductoisomerase</shortName>
        <ecNumber evidence="1">1.1.1.267</ecNumber>
    </recommendedName>
    <alternativeName>
        <fullName evidence="1">1-deoxyxylulose-5-phosphate reductoisomerase</fullName>
    </alternativeName>
    <alternativeName>
        <fullName evidence="1">2-C-methyl-D-erythritol 4-phosphate synthase</fullName>
    </alternativeName>
</protein>
<evidence type="ECO:0000255" key="1">
    <source>
        <dbReference type="HAMAP-Rule" id="MF_00183"/>
    </source>
</evidence>